<feature type="chain" id="PRO_1000090032" description="tRNA sulfurtransferase">
    <location>
        <begin position="1"/>
        <end position="482"/>
    </location>
</feature>
<feature type="domain" description="THUMP" evidence="1">
    <location>
        <begin position="61"/>
        <end position="165"/>
    </location>
</feature>
<feature type="domain" description="Rhodanese" evidence="1">
    <location>
        <begin position="404"/>
        <end position="482"/>
    </location>
</feature>
<feature type="active site" description="Cysteine persulfide intermediate" evidence="1">
    <location>
        <position position="456"/>
    </location>
</feature>
<feature type="binding site" evidence="1">
    <location>
        <begin position="183"/>
        <end position="184"/>
    </location>
    <ligand>
        <name>ATP</name>
        <dbReference type="ChEBI" id="CHEBI:30616"/>
    </ligand>
</feature>
<feature type="binding site" evidence="1">
    <location>
        <position position="265"/>
    </location>
    <ligand>
        <name>ATP</name>
        <dbReference type="ChEBI" id="CHEBI:30616"/>
    </ligand>
</feature>
<feature type="binding site" evidence="1">
    <location>
        <position position="287"/>
    </location>
    <ligand>
        <name>ATP</name>
        <dbReference type="ChEBI" id="CHEBI:30616"/>
    </ligand>
</feature>
<feature type="binding site" evidence="1">
    <location>
        <position position="296"/>
    </location>
    <ligand>
        <name>ATP</name>
        <dbReference type="ChEBI" id="CHEBI:30616"/>
    </ligand>
</feature>
<feature type="disulfide bond" description="Redox-active" evidence="1">
    <location>
        <begin position="344"/>
        <end position="456"/>
    </location>
</feature>
<gene>
    <name evidence="1" type="primary">thiI</name>
    <name type="ordered locus">SNSL254_A0472</name>
</gene>
<name>THII_SALNS</name>
<comment type="function">
    <text evidence="1">Catalyzes the ATP-dependent transfer of a sulfur to tRNA to produce 4-thiouridine in position 8 of tRNAs, which functions as a near-UV photosensor. Also catalyzes the transfer of sulfur to the sulfur carrier protein ThiS, forming ThiS-thiocarboxylate. This is a step in the synthesis of thiazole, in the thiamine biosynthesis pathway. The sulfur is donated as persulfide by IscS.</text>
</comment>
<comment type="catalytic activity">
    <reaction evidence="1">
        <text>[ThiI sulfur-carrier protein]-S-sulfanyl-L-cysteine + a uridine in tRNA + 2 reduced [2Fe-2S]-[ferredoxin] + ATP + H(+) = [ThiI sulfur-carrier protein]-L-cysteine + a 4-thiouridine in tRNA + 2 oxidized [2Fe-2S]-[ferredoxin] + AMP + diphosphate</text>
        <dbReference type="Rhea" id="RHEA:24176"/>
        <dbReference type="Rhea" id="RHEA-COMP:10000"/>
        <dbReference type="Rhea" id="RHEA-COMP:10001"/>
        <dbReference type="Rhea" id="RHEA-COMP:13337"/>
        <dbReference type="Rhea" id="RHEA-COMP:13338"/>
        <dbReference type="Rhea" id="RHEA-COMP:13339"/>
        <dbReference type="Rhea" id="RHEA-COMP:13340"/>
        <dbReference type="ChEBI" id="CHEBI:15378"/>
        <dbReference type="ChEBI" id="CHEBI:29950"/>
        <dbReference type="ChEBI" id="CHEBI:30616"/>
        <dbReference type="ChEBI" id="CHEBI:33019"/>
        <dbReference type="ChEBI" id="CHEBI:33737"/>
        <dbReference type="ChEBI" id="CHEBI:33738"/>
        <dbReference type="ChEBI" id="CHEBI:61963"/>
        <dbReference type="ChEBI" id="CHEBI:65315"/>
        <dbReference type="ChEBI" id="CHEBI:136798"/>
        <dbReference type="ChEBI" id="CHEBI:456215"/>
        <dbReference type="EC" id="2.8.1.4"/>
    </reaction>
</comment>
<comment type="catalytic activity">
    <reaction evidence="1">
        <text>[ThiS sulfur-carrier protein]-C-terminal Gly-Gly-AMP + S-sulfanyl-L-cysteinyl-[cysteine desulfurase] + AH2 = [ThiS sulfur-carrier protein]-C-terminal-Gly-aminoethanethioate + L-cysteinyl-[cysteine desulfurase] + A + AMP + 2 H(+)</text>
        <dbReference type="Rhea" id="RHEA:43340"/>
        <dbReference type="Rhea" id="RHEA-COMP:12157"/>
        <dbReference type="Rhea" id="RHEA-COMP:12158"/>
        <dbReference type="Rhea" id="RHEA-COMP:12910"/>
        <dbReference type="Rhea" id="RHEA-COMP:19908"/>
        <dbReference type="ChEBI" id="CHEBI:13193"/>
        <dbReference type="ChEBI" id="CHEBI:15378"/>
        <dbReference type="ChEBI" id="CHEBI:17499"/>
        <dbReference type="ChEBI" id="CHEBI:29950"/>
        <dbReference type="ChEBI" id="CHEBI:61963"/>
        <dbReference type="ChEBI" id="CHEBI:90618"/>
        <dbReference type="ChEBI" id="CHEBI:232372"/>
        <dbReference type="ChEBI" id="CHEBI:456215"/>
    </reaction>
</comment>
<comment type="pathway">
    <text evidence="1">Cofactor biosynthesis; thiamine diphosphate biosynthesis.</text>
</comment>
<comment type="subcellular location">
    <subcellularLocation>
        <location evidence="1">Cytoplasm</location>
    </subcellularLocation>
</comment>
<comment type="similarity">
    <text evidence="1">Belongs to the ThiI family.</text>
</comment>
<sequence>MKFIIKLFPEITIKSQSVRLRFIKILTGNIRNVLKHYDETLAVVRHWDNIEVRAKDENQRLAIRDALTRIPGIHHILEVEDVPFTDMHDIFEKALAQYREQLEGKTFCVRVKRRGKHEFSSIEVERYVGGGLNQHIESARVKLTNPDVTVHLEVEDDRLLLIKGRYEGIGGFPIGTQEDVLSLISGGFDSGVSSYMLMRRGCRVHYCFFNLGGAAHEIGVRQVAHYLWNRFGSSHRVRFVAINFEPVVGEILEKVDDGQMGVVLKRMMVRAASKVAERYGVQALVTGEALGQVSSQTLTNLRLIDNVSDTLILRPLISYDKEHIINLARQIGTEDFARTMPEYCGVISKSPTVKAIKAKIEAEEENFDFSILDKVVEEANNVDIREIAQQTQQEVVEVETVSGFGPNDVILDIRSVDEQDDKPLKVEGVDVVSLPFYKLSTKFGDLDQSKTWLLWCERGVMSRLQALYLREQGFANVKVYRP</sequence>
<proteinExistence type="inferred from homology"/>
<organism>
    <name type="scientific">Salmonella newport (strain SL254)</name>
    <dbReference type="NCBI Taxonomy" id="423368"/>
    <lineage>
        <taxon>Bacteria</taxon>
        <taxon>Pseudomonadati</taxon>
        <taxon>Pseudomonadota</taxon>
        <taxon>Gammaproteobacteria</taxon>
        <taxon>Enterobacterales</taxon>
        <taxon>Enterobacteriaceae</taxon>
        <taxon>Salmonella</taxon>
    </lineage>
</organism>
<dbReference type="EC" id="2.8.1.4" evidence="1"/>
<dbReference type="EMBL" id="CP001113">
    <property type="protein sequence ID" value="ACF65434.1"/>
    <property type="molecule type" value="Genomic_DNA"/>
</dbReference>
<dbReference type="RefSeq" id="WP_000668650.1">
    <property type="nucleotide sequence ID" value="NZ_CCMR01000003.1"/>
</dbReference>
<dbReference type="SMR" id="B4SWR7"/>
<dbReference type="KEGG" id="see:SNSL254_A0472"/>
<dbReference type="HOGENOM" id="CLU_037952_4_1_6"/>
<dbReference type="UniPathway" id="UPA00060"/>
<dbReference type="Proteomes" id="UP000008824">
    <property type="component" value="Chromosome"/>
</dbReference>
<dbReference type="GO" id="GO:0005829">
    <property type="term" value="C:cytosol"/>
    <property type="evidence" value="ECO:0007669"/>
    <property type="project" value="TreeGrafter"/>
</dbReference>
<dbReference type="GO" id="GO:0005524">
    <property type="term" value="F:ATP binding"/>
    <property type="evidence" value="ECO:0007669"/>
    <property type="project" value="UniProtKB-UniRule"/>
</dbReference>
<dbReference type="GO" id="GO:0004810">
    <property type="term" value="F:CCA tRNA nucleotidyltransferase activity"/>
    <property type="evidence" value="ECO:0007669"/>
    <property type="project" value="InterPro"/>
</dbReference>
<dbReference type="GO" id="GO:0000049">
    <property type="term" value="F:tRNA binding"/>
    <property type="evidence" value="ECO:0007669"/>
    <property type="project" value="UniProtKB-UniRule"/>
</dbReference>
<dbReference type="GO" id="GO:0140741">
    <property type="term" value="F:tRNA-uracil-4 sulfurtransferase activity"/>
    <property type="evidence" value="ECO:0007669"/>
    <property type="project" value="UniProtKB-EC"/>
</dbReference>
<dbReference type="GO" id="GO:0009228">
    <property type="term" value="P:thiamine biosynthetic process"/>
    <property type="evidence" value="ECO:0007669"/>
    <property type="project" value="UniProtKB-KW"/>
</dbReference>
<dbReference type="GO" id="GO:0009229">
    <property type="term" value="P:thiamine diphosphate biosynthetic process"/>
    <property type="evidence" value="ECO:0007669"/>
    <property type="project" value="UniProtKB-UniRule"/>
</dbReference>
<dbReference type="GO" id="GO:0052837">
    <property type="term" value="P:thiazole biosynthetic process"/>
    <property type="evidence" value="ECO:0007669"/>
    <property type="project" value="InterPro"/>
</dbReference>
<dbReference type="GO" id="GO:0002937">
    <property type="term" value="P:tRNA 4-thiouridine biosynthesis"/>
    <property type="evidence" value="ECO:0007669"/>
    <property type="project" value="TreeGrafter"/>
</dbReference>
<dbReference type="CDD" id="cd01712">
    <property type="entry name" value="PPase_ThiI"/>
    <property type="match status" value="1"/>
</dbReference>
<dbReference type="CDD" id="cd00158">
    <property type="entry name" value="RHOD"/>
    <property type="match status" value="1"/>
</dbReference>
<dbReference type="CDD" id="cd11716">
    <property type="entry name" value="THUMP_ThiI"/>
    <property type="match status" value="1"/>
</dbReference>
<dbReference type="FunFam" id="3.30.2130.30:FF:000002">
    <property type="entry name" value="tRNA sulfurtransferase"/>
    <property type="match status" value="1"/>
</dbReference>
<dbReference type="FunFam" id="3.40.250.10:FF:000003">
    <property type="entry name" value="tRNA sulfurtransferase"/>
    <property type="match status" value="1"/>
</dbReference>
<dbReference type="FunFam" id="3.40.50.620:FF:000029">
    <property type="entry name" value="tRNA sulfurtransferase"/>
    <property type="match status" value="1"/>
</dbReference>
<dbReference type="Gene3D" id="3.30.2130.30">
    <property type="match status" value="1"/>
</dbReference>
<dbReference type="Gene3D" id="3.40.50.620">
    <property type="entry name" value="HUPs"/>
    <property type="match status" value="1"/>
</dbReference>
<dbReference type="Gene3D" id="3.40.250.10">
    <property type="entry name" value="Rhodanese-like domain"/>
    <property type="match status" value="1"/>
</dbReference>
<dbReference type="HAMAP" id="MF_00021">
    <property type="entry name" value="ThiI"/>
    <property type="match status" value="1"/>
</dbReference>
<dbReference type="InterPro" id="IPR001763">
    <property type="entry name" value="Rhodanese-like_dom"/>
</dbReference>
<dbReference type="InterPro" id="IPR036873">
    <property type="entry name" value="Rhodanese-like_dom_sf"/>
</dbReference>
<dbReference type="InterPro" id="IPR014729">
    <property type="entry name" value="Rossmann-like_a/b/a_fold"/>
</dbReference>
<dbReference type="InterPro" id="IPR020536">
    <property type="entry name" value="ThiI_AANH"/>
</dbReference>
<dbReference type="InterPro" id="IPR054173">
    <property type="entry name" value="ThiI_fer"/>
</dbReference>
<dbReference type="InterPro" id="IPR049961">
    <property type="entry name" value="ThiI_N"/>
</dbReference>
<dbReference type="InterPro" id="IPR026340">
    <property type="entry name" value="THII_Thiazole_biosynth_dom"/>
</dbReference>
<dbReference type="InterPro" id="IPR004114">
    <property type="entry name" value="THUMP_dom"/>
</dbReference>
<dbReference type="InterPro" id="IPR049962">
    <property type="entry name" value="THUMP_ThiI"/>
</dbReference>
<dbReference type="InterPro" id="IPR003720">
    <property type="entry name" value="tRNA_STrfase"/>
</dbReference>
<dbReference type="InterPro" id="IPR050102">
    <property type="entry name" value="tRNA_sulfurtransferase_ThiI"/>
</dbReference>
<dbReference type="NCBIfam" id="TIGR04271">
    <property type="entry name" value="ThiI_C_thiazole"/>
    <property type="match status" value="1"/>
</dbReference>
<dbReference type="NCBIfam" id="TIGR00342">
    <property type="entry name" value="tRNA uracil 4-sulfurtransferase ThiI"/>
    <property type="match status" value="1"/>
</dbReference>
<dbReference type="PANTHER" id="PTHR43209">
    <property type="entry name" value="TRNA SULFURTRANSFERASE"/>
    <property type="match status" value="1"/>
</dbReference>
<dbReference type="PANTHER" id="PTHR43209:SF1">
    <property type="entry name" value="TRNA SULFURTRANSFERASE"/>
    <property type="match status" value="1"/>
</dbReference>
<dbReference type="Pfam" id="PF02568">
    <property type="entry name" value="ThiI"/>
    <property type="match status" value="1"/>
</dbReference>
<dbReference type="Pfam" id="PF22025">
    <property type="entry name" value="ThiI_fer"/>
    <property type="match status" value="1"/>
</dbReference>
<dbReference type="Pfam" id="PF02926">
    <property type="entry name" value="THUMP"/>
    <property type="match status" value="1"/>
</dbReference>
<dbReference type="SMART" id="SM00981">
    <property type="entry name" value="THUMP"/>
    <property type="match status" value="1"/>
</dbReference>
<dbReference type="SUPFAM" id="SSF52402">
    <property type="entry name" value="Adenine nucleotide alpha hydrolases-like"/>
    <property type="match status" value="1"/>
</dbReference>
<dbReference type="SUPFAM" id="SSF52821">
    <property type="entry name" value="Rhodanese/Cell cycle control phosphatase"/>
    <property type="match status" value="1"/>
</dbReference>
<dbReference type="SUPFAM" id="SSF143437">
    <property type="entry name" value="THUMP domain-like"/>
    <property type="match status" value="1"/>
</dbReference>
<dbReference type="PROSITE" id="PS50206">
    <property type="entry name" value="RHODANESE_3"/>
    <property type="match status" value="1"/>
</dbReference>
<dbReference type="PROSITE" id="PS51165">
    <property type="entry name" value="THUMP"/>
    <property type="match status" value="1"/>
</dbReference>
<protein>
    <recommendedName>
        <fullName evidence="1">tRNA sulfurtransferase</fullName>
        <ecNumber evidence="1">2.8.1.4</ecNumber>
    </recommendedName>
    <alternativeName>
        <fullName evidence="1">Sulfur carrier protein ThiS sulfurtransferase</fullName>
    </alternativeName>
    <alternativeName>
        <fullName evidence="1">Thiamine biosynthesis protein ThiI</fullName>
    </alternativeName>
    <alternativeName>
        <fullName evidence="1">tRNA 4-thiouridine synthase</fullName>
    </alternativeName>
</protein>
<keyword id="KW-0067">ATP-binding</keyword>
<keyword id="KW-0963">Cytoplasm</keyword>
<keyword id="KW-1015">Disulfide bond</keyword>
<keyword id="KW-0547">Nucleotide-binding</keyword>
<keyword id="KW-0676">Redox-active center</keyword>
<keyword id="KW-0694">RNA-binding</keyword>
<keyword id="KW-0784">Thiamine biosynthesis</keyword>
<keyword id="KW-0808">Transferase</keyword>
<keyword id="KW-0820">tRNA-binding</keyword>
<evidence type="ECO:0000255" key="1">
    <source>
        <dbReference type="HAMAP-Rule" id="MF_00021"/>
    </source>
</evidence>
<reference key="1">
    <citation type="journal article" date="2011" name="J. Bacteriol.">
        <title>Comparative genomics of 28 Salmonella enterica isolates: evidence for CRISPR-mediated adaptive sublineage evolution.</title>
        <authorList>
            <person name="Fricke W.F."/>
            <person name="Mammel M.K."/>
            <person name="McDermott P.F."/>
            <person name="Tartera C."/>
            <person name="White D.G."/>
            <person name="Leclerc J.E."/>
            <person name="Ravel J."/>
            <person name="Cebula T.A."/>
        </authorList>
    </citation>
    <scope>NUCLEOTIDE SEQUENCE [LARGE SCALE GENOMIC DNA]</scope>
    <source>
        <strain>SL254</strain>
    </source>
</reference>
<accession>B4SWR7</accession>